<proteinExistence type="inferred from homology"/>
<evidence type="ECO:0000250" key="1">
    <source>
        <dbReference type="UniProtKB" id="Q0E9G3"/>
    </source>
</evidence>
<evidence type="ECO:0000255" key="2">
    <source>
        <dbReference type="HAMAP-Rule" id="MF_03069"/>
    </source>
</evidence>
<evidence type="ECO:0000256" key="3">
    <source>
        <dbReference type="SAM" id="MobiDB-lite"/>
    </source>
</evidence>
<feature type="chain" id="PRO_0000365811" description="Protein kintoun">
    <location>
        <begin position="1"/>
        <end position="838"/>
    </location>
</feature>
<feature type="region of interest" description="Disordered" evidence="3">
    <location>
        <begin position="106"/>
        <end position="125"/>
    </location>
</feature>
<feature type="region of interest" description="Disordered" evidence="3">
    <location>
        <begin position="212"/>
        <end position="238"/>
    </location>
</feature>
<feature type="region of interest" description="Disordered" evidence="3">
    <location>
        <begin position="370"/>
        <end position="411"/>
    </location>
</feature>
<feature type="region of interest" description="Disordered" evidence="3">
    <location>
        <begin position="557"/>
        <end position="696"/>
    </location>
</feature>
<feature type="region of interest" description="Disordered" evidence="3">
    <location>
        <begin position="776"/>
        <end position="838"/>
    </location>
</feature>
<feature type="compositionally biased region" description="Polar residues" evidence="3">
    <location>
        <begin position="114"/>
        <end position="125"/>
    </location>
</feature>
<feature type="compositionally biased region" description="Basic and acidic residues" evidence="3">
    <location>
        <begin position="370"/>
        <end position="380"/>
    </location>
</feature>
<feature type="compositionally biased region" description="Acidic residues" evidence="3">
    <location>
        <begin position="389"/>
        <end position="398"/>
    </location>
</feature>
<feature type="compositionally biased region" description="Basic and acidic residues" evidence="3">
    <location>
        <begin position="557"/>
        <end position="572"/>
    </location>
</feature>
<feature type="compositionally biased region" description="Acidic residues" evidence="3">
    <location>
        <begin position="583"/>
        <end position="592"/>
    </location>
</feature>
<feature type="compositionally biased region" description="Low complexity" evidence="3">
    <location>
        <begin position="601"/>
        <end position="611"/>
    </location>
</feature>
<feature type="compositionally biased region" description="Basic residues" evidence="3">
    <location>
        <begin position="612"/>
        <end position="623"/>
    </location>
</feature>
<feature type="compositionally biased region" description="Basic residues" evidence="3">
    <location>
        <begin position="673"/>
        <end position="683"/>
    </location>
</feature>
<feature type="compositionally biased region" description="Basic and acidic residues" evidence="3">
    <location>
        <begin position="789"/>
        <end position="802"/>
    </location>
</feature>
<feature type="modified residue" description="Phosphoserine" evidence="1">
    <location>
        <position position="378"/>
    </location>
</feature>
<feature type="modified residue" description="Phosphoserine" evidence="1">
    <location>
        <position position="781"/>
    </location>
</feature>
<accession>B4HR78</accession>
<dbReference type="EMBL" id="CH480816">
    <property type="protein sequence ID" value="EDW46821.1"/>
    <property type="molecule type" value="Genomic_DNA"/>
</dbReference>
<dbReference type="SMR" id="B4HR78"/>
<dbReference type="STRING" id="7238.B4HR78"/>
<dbReference type="EnsemblMetazoa" id="FBtr0203740">
    <property type="protein sequence ID" value="FBpp0202232"/>
    <property type="gene ID" value="FBgn0175636"/>
</dbReference>
<dbReference type="EnsemblMetazoa" id="XM_002032772.2">
    <property type="protein sequence ID" value="XP_002032808.1"/>
    <property type="gene ID" value="LOC6608060"/>
</dbReference>
<dbReference type="EnsemblMetazoa" id="XM_032715485.1">
    <property type="protein sequence ID" value="XP_032571376.1"/>
    <property type="gene ID" value="LOC6608060"/>
</dbReference>
<dbReference type="GeneID" id="6608060"/>
<dbReference type="KEGG" id="dse:6608060"/>
<dbReference type="HOGENOM" id="CLU_012715_0_0_1"/>
<dbReference type="OMA" id="CFLNISK"/>
<dbReference type="PhylomeDB" id="B4HR78"/>
<dbReference type="Proteomes" id="UP000001292">
    <property type="component" value="Unassembled WGS sequence"/>
</dbReference>
<dbReference type="GO" id="GO:0005737">
    <property type="term" value="C:cytoplasm"/>
    <property type="evidence" value="ECO:0007669"/>
    <property type="project" value="UniProtKB-SubCell"/>
</dbReference>
<dbReference type="GO" id="GO:0008157">
    <property type="term" value="F:protein phosphatase 1 binding"/>
    <property type="evidence" value="ECO:0007669"/>
    <property type="project" value="EnsemblMetazoa"/>
</dbReference>
<dbReference type="GO" id="GO:0070286">
    <property type="term" value="P:axonemal dynein complex assembly"/>
    <property type="evidence" value="ECO:0007669"/>
    <property type="project" value="UniProtKB-UniRule"/>
</dbReference>
<dbReference type="GO" id="GO:0060285">
    <property type="term" value="P:cilium-dependent cell motility"/>
    <property type="evidence" value="ECO:0007669"/>
    <property type="project" value="UniProtKB-UniRule"/>
</dbReference>
<dbReference type="HAMAP" id="MF_03069">
    <property type="entry name" value="Kintoun"/>
    <property type="match status" value="1"/>
</dbReference>
<dbReference type="InterPro" id="IPR034727">
    <property type="entry name" value="Kintoun"/>
</dbReference>
<dbReference type="InterPro" id="IPR050734">
    <property type="entry name" value="PIH1/Kintoun_subfamily"/>
</dbReference>
<dbReference type="InterPro" id="IPR012981">
    <property type="entry name" value="PIH1_N"/>
</dbReference>
<dbReference type="InterPro" id="IPR041442">
    <property type="entry name" value="PIH1D1/2/3_CS-like"/>
</dbReference>
<dbReference type="PANTHER" id="PTHR22997">
    <property type="entry name" value="PIH1 DOMAIN-CONTAINING PROTEIN 1"/>
    <property type="match status" value="1"/>
</dbReference>
<dbReference type="PANTHER" id="PTHR22997:SF3">
    <property type="entry name" value="PROTEIN KINTOUN"/>
    <property type="match status" value="1"/>
</dbReference>
<dbReference type="Pfam" id="PF08190">
    <property type="entry name" value="PIH1"/>
    <property type="match status" value="1"/>
</dbReference>
<dbReference type="Pfam" id="PF18201">
    <property type="entry name" value="PIH1_CS"/>
    <property type="match status" value="1"/>
</dbReference>
<organism>
    <name type="scientific">Drosophila sechellia</name>
    <name type="common">Fruit fly</name>
    <dbReference type="NCBI Taxonomy" id="7238"/>
    <lineage>
        <taxon>Eukaryota</taxon>
        <taxon>Metazoa</taxon>
        <taxon>Ecdysozoa</taxon>
        <taxon>Arthropoda</taxon>
        <taxon>Hexapoda</taxon>
        <taxon>Insecta</taxon>
        <taxon>Pterygota</taxon>
        <taxon>Neoptera</taxon>
        <taxon>Endopterygota</taxon>
        <taxon>Diptera</taxon>
        <taxon>Brachycera</taxon>
        <taxon>Muscomorpha</taxon>
        <taxon>Ephydroidea</taxon>
        <taxon>Drosophilidae</taxon>
        <taxon>Drosophila</taxon>
        <taxon>Sophophora</taxon>
    </lineage>
</organism>
<name>KTU_DROSE</name>
<gene>
    <name evidence="2" type="primary">Nop17l</name>
    <name evidence="2" type="synonym">Ppi20</name>
    <name type="ORF">GM20755</name>
</gene>
<sequence length="838" mass="95203">MSASRSRNKQSKLCDDERLDISKDEFNRFQEAFGQEEFRKLFFDYVDEIQDPENRKIYEAEITQLEKERGVEVRFIHPKPGFVIKTALDGELKCFINIASSEEIERPKNEVATDPSSGSRGLNWSIPMAQTTSRDDFDAKNNHCKVFDVVFHPDALHLAMRNKQFRQCLIDTALDAVEREYKVSLDRANLKFPKLDYKGIPRPTVIRKMSDNPTAEEQEPHPLAHMFPTKPPAPGKPEPRVLPMKTKPTPVPEFTVPRYTIKHSHDVDLSEYTDELDAKLHVTVPRSLVVEIELPLLRSTAECQLDVTSKSVYLFSERQGAKYRLKLDLPFIVDDKAGRARFDTDMRRLSITLPVVRKSVQEQAQMHETLRHFSREDSGVELHSNSESPVEEDPDGELSDSKADISKTSSPTVVRNANSPFLKSSVHYQLPSKFDCNVLDNVMAFVLHVPNVQPDSIEQLREQRSLHLKFATIGSGYYPTHYAFYVELSADHEDSAIESAEAEAWDNNVVLKLYLNSQSETPAGYLAGLDATELKEYPVHGQYHVKSKEKVNAKKENAPLDVEFERNQEGHALKVTIRPGTKEEEEEEEDKENQDQKPESDQQQQQQVQNKKSGKKQRKRNKKERSLSESACADMVLQEPLAKSNELQPRATFKLPPQRKQRSYSESNDSTGRSHRGILKRFSRYGPRPSMSDSCSSIDDSSSYSCSVDASGASLFSQSFGGIPEEDRSDAGLSESCKKTVRFNDHIMKQVFRLDSSILGQRKKNQKRRDLKLRAQQRRLSEGDSVDYEETRGSALKQKENPSRNCTDSGLDLTGAAGAHSNNNESDAKNAMMFEMDD</sequence>
<comment type="function">
    <text evidence="2">Required for cytoplasmic pre-assembly of axonemal dyneins, thereby playing a central role in motility in cilia and flagella. Involved in pre-assembly of dynein arm complexes in the cytoplasm before intraflagellar transport loads them for the ciliary compartment.</text>
</comment>
<comment type="subunit">
    <text evidence="2">Interacts with Pp1alpha-96A, Pp1-87B, Pp1-13C and flw.</text>
</comment>
<comment type="subcellular location">
    <subcellularLocation>
        <location evidence="2">Cytoplasm</location>
    </subcellularLocation>
</comment>
<comment type="similarity">
    <text evidence="2">Belongs to the PIH1 family. Kintoun subfamily.</text>
</comment>
<protein>
    <recommendedName>
        <fullName evidence="2">Protein kintoun</fullName>
    </recommendedName>
    <alternativeName>
        <fullName evidence="2">Dynein assembly factor 2, axonemal homolog</fullName>
    </alternativeName>
    <alternativeName>
        <fullName evidence="2">PP1-interacting protein 20</fullName>
    </alternativeName>
</protein>
<reference key="1">
    <citation type="journal article" date="2007" name="Nature">
        <title>Evolution of genes and genomes on the Drosophila phylogeny.</title>
        <authorList>
            <consortium name="Drosophila 12 genomes consortium"/>
        </authorList>
    </citation>
    <scope>NUCLEOTIDE SEQUENCE [LARGE SCALE GENOMIC DNA]</scope>
    <source>
        <strain>Rob3c / Tucson 14021-0248.25</strain>
    </source>
</reference>
<keyword id="KW-0963">Cytoplasm</keyword>
<keyword id="KW-0597">Phosphoprotein</keyword>
<keyword id="KW-1185">Reference proteome</keyword>